<comment type="function">
    <text evidence="1">Accelerates the degradation of transcripts by removing pyrophosphate from the 5'-end of triphosphorylated RNA, leading to a more labile monophosphorylated state that can stimulate subsequent ribonuclease cleavage.</text>
</comment>
<comment type="cofactor">
    <cofactor evidence="1">
        <name>a divalent metal cation</name>
        <dbReference type="ChEBI" id="CHEBI:60240"/>
    </cofactor>
</comment>
<comment type="similarity">
    <text evidence="1">Belongs to the Nudix hydrolase family. RppH subfamily.</text>
</comment>
<gene>
    <name evidence="1" type="primary">rppH</name>
    <name evidence="1" type="synonym">nudH</name>
    <name type="ordered locus">Pnec_0217</name>
</gene>
<sequence length="197" mass="23378">MLDREGYRPNVGIVLLNSRNEVFWGKRVGQHSWQFPQGGIQHGESPEQAMYRELHEEVGLLPEHVQIIGRTRDWLRYDVPEEYLRRQNSTRVHRAAYRGQKQIWFLLRLVGLDSDIQLRAFEHPEFDAWRWVPFWIQLDAVIGFKREVYQLALSELARYLSRGMRMQQLAWGTPLDLFQSFYAGNEDQSKSSEKSDK</sequence>
<reference key="1">
    <citation type="journal article" date="2013" name="Proc. Natl. Acad. Sci. U.S.A.">
        <title>Polynucleobacter necessarius, a model for genome reduction in both free-living and symbiotic bacteria.</title>
        <authorList>
            <person name="Boscaro V."/>
            <person name="Felletti M."/>
            <person name="Vannini C."/>
            <person name="Ackerman M.S."/>
            <person name="Chain P.S."/>
            <person name="Malfatti S."/>
            <person name="Vergez L.M."/>
            <person name="Shin M."/>
            <person name="Doak T.G."/>
            <person name="Lynch M."/>
            <person name="Petroni G."/>
        </authorList>
    </citation>
    <scope>NUCLEOTIDE SEQUENCE [LARGE SCALE GENOMIC DNA]</scope>
    <source>
        <strain>STIR1</strain>
    </source>
</reference>
<accession>B1XT37</accession>
<organism>
    <name type="scientific">Polynucleobacter necessarius subsp. necessarius (strain STIR1)</name>
    <dbReference type="NCBI Taxonomy" id="452638"/>
    <lineage>
        <taxon>Bacteria</taxon>
        <taxon>Pseudomonadati</taxon>
        <taxon>Pseudomonadota</taxon>
        <taxon>Betaproteobacteria</taxon>
        <taxon>Burkholderiales</taxon>
        <taxon>Burkholderiaceae</taxon>
        <taxon>Polynucleobacter</taxon>
    </lineage>
</organism>
<dbReference type="EC" id="3.6.1.-" evidence="1"/>
<dbReference type="EMBL" id="CP001010">
    <property type="protein sequence ID" value="ACB43514.1"/>
    <property type="molecule type" value="Genomic_DNA"/>
</dbReference>
<dbReference type="SMR" id="B1XT37"/>
<dbReference type="STRING" id="452638.Pnec_0217"/>
<dbReference type="KEGG" id="pne:Pnec_0217"/>
<dbReference type="eggNOG" id="COG0494">
    <property type="taxonomic scope" value="Bacteria"/>
</dbReference>
<dbReference type="HOGENOM" id="CLU_087195_3_1_4"/>
<dbReference type="OrthoDB" id="9816040at2"/>
<dbReference type="GO" id="GO:0016462">
    <property type="term" value="F:pyrophosphatase activity"/>
    <property type="evidence" value="ECO:0007669"/>
    <property type="project" value="UniProtKB-ARBA"/>
</dbReference>
<dbReference type="CDD" id="cd03671">
    <property type="entry name" value="NUDIX_Ap4A_hydrolase_plant_like"/>
    <property type="match status" value="1"/>
</dbReference>
<dbReference type="Gene3D" id="3.90.79.10">
    <property type="entry name" value="Nucleoside Triphosphate Pyrophosphohydrolase"/>
    <property type="match status" value="1"/>
</dbReference>
<dbReference type="HAMAP" id="MF_00298">
    <property type="entry name" value="Nudix_RppH"/>
    <property type="match status" value="1"/>
</dbReference>
<dbReference type="InterPro" id="IPR020476">
    <property type="entry name" value="Nudix_hydrolase"/>
</dbReference>
<dbReference type="InterPro" id="IPR015797">
    <property type="entry name" value="NUDIX_hydrolase-like_dom_sf"/>
</dbReference>
<dbReference type="InterPro" id="IPR020084">
    <property type="entry name" value="NUDIX_hydrolase_CS"/>
</dbReference>
<dbReference type="InterPro" id="IPR000086">
    <property type="entry name" value="NUDIX_hydrolase_dom"/>
</dbReference>
<dbReference type="InterPro" id="IPR022927">
    <property type="entry name" value="RppH"/>
</dbReference>
<dbReference type="NCBIfam" id="NF001935">
    <property type="entry name" value="PRK00714.1-2"/>
    <property type="match status" value="1"/>
</dbReference>
<dbReference type="NCBIfam" id="NF001937">
    <property type="entry name" value="PRK00714.1-4"/>
    <property type="match status" value="1"/>
</dbReference>
<dbReference type="NCBIfam" id="NF001938">
    <property type="entry name" value="PRK00714.1-5"/>
    <property type="match status" value="1"/>
</dbReference>
<dbReference type="PANTHER" id="PTHR43046">
    <property type="entry name" value="GDP-MANNOSE MANNOSYL HYDROLASE"/>
    <property type="match status" value="1"/>
</dbReference>
<dbReference type="PANTHER" id="PTHR43046:SF14">
    <property type="entry name" value="MUTT_NUDIX FAMILY PROTEIN"/>
    <property type="match status" value="1"/>
</dbReference>
<dbReference type="Pfam" id="PF00293">
    <property type="entry name" value="NUDIX"/>
    <property type="match status" value="1"/>
</dbReference>
<dbReference type="PRINTS" id="PR00502">
    <property type="entry name" value="NUDIXFAMILY"/>
</dbReference>
<dbReference type="SUPFAM" id="SSF55811">
    <property type="entry name" value="Nudix"/>
    <property type="match status" value="1"/>
</dbReference>
<dbReference type="PROSITE" id="PS51462">
    <property type="entry name" value="NUDIX"/>
    <property type="match status" value="1"/>
</dbReference>
<dbReference type="PROSITE" id="PS00893">
    <property type="entry name" value="NUDIX_BOX"/>
    <property type="match status" value="1"/>
</dbReference>
<feature type="chain" id="PRO_1000115287" description="RNA pyrophosphohydrolase">
    <location>
        <begin position="1"/>
        <end position="197"/>
    </location>
</feature>
<feature type="domain" description="Nudix hydrolase" evidence="1">
    <location>
        <begin position="6"/>
        <end position="154"/>
    </location>
</feature>
<feature type="short sequence motif" description="Nudix box">
    <location>
        <begin position="38"/>
        <end position="59"/>
    </location>
</feature>
<name>RPPH_POLNS</name>
<evidence type="ECO:0000255" key="1">
    <source>
        <dbReference type="HAMAP-Rule" id="MF_00298"/>
    </source>
</evidence>
<proteinExistence type="inferred from homology"/>
<protein>
    <recommendedName>
        <fullName evidence="1">RNA pyrophosphohydrolase</fullName>
        <ecNumber evidence="1">3.6.1.-</ecNumber>
    </recommendedName>
    <alternativeName>
        <fullName evidence="1">(Di)nucleoside polyphosphate hydrolase</fullName>
    </alternativeName>
</protein>
<keyword id="KW-0378">Hydrolase</keyword>